<comment type="function">
    <text evidence="2">May function as scaffolding protein. Required for normal location of RPGR at the connecting cilium of photoreceptor cells. Required for normal disk morphogenesis and disk organization in the outer segment of photoreceptor cells and for survival of photoreceptor cells.</text>
</comment>
<comment type="subunit">
    <text evidence="1 6 8">Forms homodimers and elongated homopolymers (By similarity). Interacts with NPHP4 (By similarity). Interacts with NEK4 (By similarity). Interacts with RPGR (PubMed:10958648). Interacts with SPATA7 (PubMed:25398945). Interacts with CEP290/NPHP6; mediating the association between RPGR and CEP290/NPHP6 (By similarity).</text>
</comment>
<comment type="subcellular location">
    <subcellularLocation>
        <location evidence="2">Cell projection</location>
        <location evidence="2">Cilium</location>
    </subcellularLocation>
    <text evidence="2">Situated between the axonemal microtubules and the plasma membrane (By similarity). In the retinal photoreceptor cell layer, localizes at the connecting cilium, a thin bridge linking the cell body and the light-sensing outer segment (By similarity). Colocalizes with RGPR in the photoreceptor connecting cilium,(at protein level) (By similarity).</text>
</comment>
<comment type="alternative products">
    <event type="alternative splicing"/>
    <isoform>
        <id>Q9GLM3-1</id>
        <name>1</name>
        <sequence type="displayed"/>
    </isoform>
    <isoform>
        <id>Q9GLM3-2</id>
        <name>2</name>
        <name>a</name>
        <sequence type="described" ref="VSP_009516"/>
    </isoform>
    <isoform>
        <id>Q9GLM3-3</id>
        <name>3</name>
        <name>b</name>
        <sequence type="described" ref="VSP_009518"/>
    </isoform>
    <isoform>
        <id>Q9GLM3-4</id>
        <name>4</name>
        <name>c</name>
        <sequence type="described" ref="VSP_009517"/>
    </isoform>
</comment>
<comment type="tissue specificity">
    <text evidence="6 7">Retina, brain, skeletal muscle and kidney. Colocalizes with RGPR in the outer segment of rod photoreceptors and cone outer segments.</text>
</comment>
<comment type="domain">
    <text evidence="1">The C2 domain does not bind calcium ions, and does not bind phosphoinositides.</text>
</comment>
<comment type="similarity">
    <text evidence="10">Belongs to the RPGRIP1 family.</text>
</comment>
<dbReference type="EMBL" id="AF227258">
    <property type="protein sequence ID" value="AAG10247.1"/>
    <property type="molecule type" value="mRNA"/>
</dbReference>
<dbReference type="EMBL" id="AF265668">
    <property type="protein sequence ID" value="AAG10002.1"/>
    <property type="molecule type" value="mRNA"/>
</dbReference>
<dbReference type="EMBL" id="AF265669">
    <property type="protein sequence ID" value="AAG10003.1"/>
    <property type="molecule type" value="mRNA"/>
</dbReference>
<dbReference type="EMBL" id="AF265670">
    <property type="protein sequence ID" value="AAG10004.1"/>
    <property type="molecule type" value="mRNA"/>
</dbReference>
<dbReference type="RefSeq" id="NP_851377.1">
    <property type="nucleotide sequence ID" value="NM_181034.2"/>
</dbReference>
<dbReference type="SMR" id="Q9GLM3"/>
<dbReference type="FunCoup" id="Q9GLM3">
    <property type="interactions" value="21"/>
</dbReference>
<dbReference type="IntAct" id="Q9GLM3">
    <property type="interactions" value="4"/>
</dbReference>
<dbReference type="STRING" id="9913.ENSBTAP00000006160"/>
<dbReference type="PaxDb" id="9913-ENSBTAP00000050597"/>
<dbReference type="GeneID" id="282656"/>
<dbReference type="KEGG" id="bta:282656"/>
<dbReference type="CTD" id="57096"/>
<dbReference type="eggNOG" id="ENOG502R3GU">
    <property type="taxonomic scope" value="Eukaryota"/>
</dbReference>
<dbReference type="InParanoid" id="Q9GLM3"/>
<dbReference type="OrthoDB" id="2133912at2759"/>
<dbReference type="Proteomes" id="UP000009136">
    <property type="component" value="Unplaced"/>
</dbReference>
<dbReference type="GO" id="GO:0032391">
    <property type="term" value="C:photoreceptor connecting cilium"/>
    <property type="evidence" value="ECO:0000250"/>
    <property type="project" value="UniProtKB"/>
</dbReference>
<dbReference type="GO" id="GO:1905515">
    <property type="term" value="P:non-motile cilium assembly"/>
    <property type="evidence" value="ECO:0000318"/>
    <property type="project" value="GO_Central"/>
</dbReference>
<dbReference type="GO" id="GO:0007601">
    <property type="term" value="P:visual perception"/>
    <property type="evidence" value="ECO:0007669"/>
    <property type="project" value="UniProtKB-KW"/>
</dbReference>
<dbReference type="CDD" id="cd00030">
    <property type="entry name" value="C2"/>
    <property type="match status" value="1"/>
</dbReference>
<dbReference type="FunFam" id="2.60.40.150:FF:000073">
    <property type="entry name" value="protein fantom isoform X1"/>
    <property type="match status" value="1"/>
</dbReference>
<dbReference type="FunFam" id="2.60.40.150:FF:000075">
    <property type="entry name" value="protein fantom isoform X1"/>
    <property type="match status" value="1"/>
</dbReference>
<dbReference type="FunFam" id="2.60.40.150:FF:000189">
    <property type="entry name" value="X-linked retinitis pigmentosa GTPase regulator-interacting protein 1"/>
    <property type="match status" value="1"/>
</dbReference>
<dbReference type="Gene3D" id="2.60.40.150">
    <property type="entry name" value="C2 domain"/>
    <property type="match status" value="3"/>
</dbReference>
<dbReference type="InterPro" id="IPR021656">
    <property type="entry name" value="C2-C2_1"/>
</dbReference>
<dbReference type="InterPro" id="IPR000008">
    <property type="entry name" value="C2_dom"/>
</dbReference>
<dbReference type="InterPro" id="IPR035892">
    <property type="entry name" value="C2_domain_sf"/>
</dbReference>
<dbReference type="InterPro" id="IPR041091">
    <property type="entry name" value="RPGRIP1_C"/>
</dbReference>
<dbReference type="InterPro" id="IPR031139">
    <property type="entry name" value="RPGRIP1_fam"/>
</dbReference>
<dbReference type="PANTHER" id="PTHR14240">
    <property type="entry name" value="RETINITIS PIGMENTOSA GTPASE REGULATOR-INTERACTING PROTEIN"/>
    <property type="match status" value="1"/>
</dbReference>
<dbReference type="PANTHER" id="PTHR14240:SF3">
    <property type="entry name" value="X-LINKED RETINITIS PIGMENTOSA GTPASE REGULATOR-INTERACTING PROTEIN 1"/>
    <property type="match status" value="1"/>
</dbReference>
<dbReference type="Pfam" id="PF00168">
    <property type="entry name" value="C2"/>
    <property type="match status" value="1"/>
</dbReference>
<dbReference type="Pfam" id="PF11618">
    <property type="entry name" value="C2-C2_1"/>
    <property type="match status" value="1"/>
</dbReference>
<dbReference type="Pfam" id="PF18111">
    <property type="entry name" value="RPGR1_C"/>
    <property type="match status" value="1"/>
</dbReference>
<dbReference type="SMART" id="SM00239">
    <property type="entry name" value="C2"/>
    <property type="match status" value="1"/>
</dbReference>
<dbReference type="SUPFAM" id="SSF49562">
    <property type="entry name" value="C2 domain (Calcium/lipid-binding domain, CaLB)"/>
    <property type="match status" value="2"/>
</dbReference>
<dbReference type="PROSITE" id="PS50004">
    <property type="entry name" value="C2"/>
    <property type="match status" value="1"/>
</dbReference>
<protein>
    <recommendedName>
        <fullName>X-linked retinitis pigmentosa GTPase regulator-interacting protein 1</fullName>
        <shortName>RPGR-interacting protein 1</shortName>
    </recommendedName>
</protein>
<reference key="1">
    <citation type="journal article" date="2000" name="Hum. Mol. Genet.">
        <title>The retinitis pigmentosa GTPase regulator (RPGR) interacts with novel transport-like proteins in the outer segments of rod photoreceptors.</title>
        <authorList>
            <person name="Roepman R."/>
            <person name="Bernoud-Hubac N."/>
            <person name="Schick D.E."/>
            <person name="Maugeri A."/>
            <person name="Berger W."/>
            <person name="Ropers H.-H."/>
            <person name="Cremers F.P.M."/>
            <person name="Ferreira P.A."/>
        </authorList>
    </citation>
    <scope>NUCLEOTIDE SEQUENCE [MRNA] (ISOFORMS 1; 2; 3 AND 4)</scope>
    <scope>INTERACTION WITH RPGR</scope>
    <scope>TISSUE SPECIFICITY</scope>
    <source>
        <tissue>Retina</tissue>
    </source>
</reference>
<reference key="2">
    <citation type="journal article" date="2002" name="Hum. Mol. Genet.">
        <title>Species-specific subcellular localization of RPGR and RPGRIP isoforms: implications for the phenotypic variability of congenital retinopathies among species.</title>
        <authorList>
            <person name="Mavlyutov T.A."/>
            <person name="Zhao H."/>
            <person name="Ferreira P.A."/>
        </authorList>
    </citation>
    <scope>TISSUE SPECIFICITY</scope>
</reference>
<reference key="3">
    <citation type="journal article" date="2015" name="Hum. Mol. Genet.">
        <title>Spata7 is a retinal ciliopathy gene critical for correct RPGRIP1 localization and protein trafficking in the retina.</title>
        <authorList>
            <person name="Eblimit A."/>
            <person name="Nguyen T.M."/>
            <person name="Chen Y."/>
            <person name="Esteve-Rudd J."/>
            <person name="Zhong H."/>
            <person name="Letteboer S."/>
            <person name="van Reeuwijk J."/>
            <person name="Simons D.L."/>
            <person name="Ding Q."/>
            <person name="Wu K.M."/>
            <person name="Li Y."/>
            <person name="van Beersum S."/>
            <person name="Moayedi Y."/>
            <person name="Xu H."/>
            <person name="Pickard P."/>
            <person name="Wang K."/>
            <person name="Gan L."/>
            <person name="Wu S.M."/>
            <person name="Williams D.S."/>
            <person name="Mardon G."/>
            <person name="Roepman R."/>
            <person name="Chen R."/>
        </authorList>
    </citation>
    <scope>INTERACTION WITH SPATA7</scope>
</reference>
<gene>
    <name type="primary">RPGRIP1</name>
</gene>
<sequence>MIPTSKGKNTKTQPPLSRMTRDELEDSLFRLREEHMLVKELFWKQQDEIKRMRTALLRLTASGRGLRAEAAADESSGSPLNGGGTESGGTAPSSTSVPRCPGSSCSSSAWAPLLPAAPSLASTRDTDSSTPPGHRAEKPKRESRDRLSYTAPPTFKEHVTNEKARGEVASEPSELGHLMTSDTMQVEEPPKSPEKMWSKDENFAQRSSLESTQKATELRASIKENIQLIRLKKLLHERNTSLAVTKAQLTEVQAAYETLLHKNQGILGAAHNALLSQVNELRAELKEESKKAVSLKSQMEDVSILQITLKEFQERVEDLEKERKLLNDNYDKLLESMLDSSNQPQWSHELGEQLQQKVSQLQDQLDVEMKEKREILLQLSQEKAQNKDLELEVTSLLQKHKQEVEDLQNISTFSQSPDRQSAPATHPALFQETIQIQPCEPKNQEEKKLSQMLSELQVSHAETTLELEKTRDMLILQRKINVCYQEELEAMMTKADNENKDHEAKLERLNQLLDLKNKRINQLEEQLKDVAYGTRQLPLCLKPLPAHENEDKVDISPWHQSENLFELHIHQAFLTSAALAQAGDTQPTTFCTYSFYDFETHCTPLVVGPQPLYDFTSQYVVEIDSLFLHYLQGASAQLDLHQAIASEHHTLAAGWICFDRVLETVERVHGSATLTGTGGEVFGVLEYWMRLRFPIRSSLQAYNKRKKAQAYLAANVLGAWEAQKDEPRSGTWKNQNELRVEIIRCCGLRSRSLGAQPSPYVMYRFFTFSDHDTTIIPASSNPYFRDLARFPVLVTSDLDQYLRREALSVYVFDDEDSEPGSYLGRVQVPLLPLAQNKSIQGDFNLTDPVGEPNGSVQVHLDWGSCYLPPENFPKPEAQSEEDTRDGLETSIEEEEASFPPQDQMVSIDTPTEAGQYQAKRKPPQVGERKEREHQVAGYSRRKHGRKTGLQGKNRMEYLSHNLLNGNTLQQVKYIEWKFSGLKISADHVLKNQQKEEEMTSSYSAQILKETPHPVNDKEFCEQASEGSEAQTTDSDEIVTPVSQKCPKADSEKMCIEIVSLAFYPEAEVMCDENVEQVYVEYRFYDLPLSETETPVSLRKPRAGEEIYFHFSKVIDLDPVEQKERRQFLFTMLIGEDPEQGHLKFTVVSDPIEEEKKECQEVGYAYLELWPMLVSGRDILEQDLDIVGPEDQATPIGKLKVSLQAAAALQAIYKEMTEDLCS</sequence>
<evidence type="ECO:0000250" key="1">
    <source>
        <dbReference type="UniProtKB" id="Q96KN7"/>
    </source>
</evidence>
<evidence type="ECO:0000250" key="2">
    <source>
        <dbReference type="UniProtKB" id="Q9EPQ2"/>
    </source>
</evidence>
<evidence type="ECO:0000255" key="3"/>
<evidence type="ECO:0000255" key="4">
    <source>
        <dbReference type="PROSITE-ProRule" id="PRU00041"/>
    </source>
</evidence>
<evidence type="ECO:0000256" key="5">
    <source>
        <dbReference type="SAM" id="MobiDB-lite"/>
    </source>
</evidence>
<evidence type="ECO:0000269" key="6">
    <source>
    </source>
</evidence>
<evidence type="ECO:0000269" key="7">
    <source>
    </source>
</evidence>
<evidence type="ECO:0000269" key="8">
    <source>
    </source>
</evidence>
<evidence type="ECO:0000303" key="9">
    <source>
    </source>
</evidence>
<evidence type="ECO:0000305" key="10"/>
<keyword id="KW-0025">Alternative splicing</keyword>
<keyword id="KW-0966">Cell projection</keyword>
<keyword id="KW-0969">Cilium</keyword>
<keyword id="KW-0175">Coiled coil</keyword>
<keyword id="KW-1185">Reference proteome</keyword>
<keyword id="KW-0716">Sensory transduction</keyword>
<keyword id="KW-0844">Vision</keyword>
<feature type="chain" id="PRO_0000097431" description="X-linked retinitis pigmentosa GTPase regulator-interacting protein 1">
    <location>
        <begin position="1"/>
        <end position="1221"/>
    </location>
</feature>
<feature type="domain" description="C2" evidence="4">
    <location>
        <begin position="723"/>
        <end position="843"/>
    </location>
</feature>
<feature type="region of interest" description="Disordered" evidence="5">
    <location>
        <begin position="1"/>
        <end position="22"/>
    </location>
</feature>
<feature type="region of interest" description="Disordered" evidence="5">
    <location>
        <begin position="68"/>
        <end position="107"/>
    </location>
</feature>
<feature type="region of interest" description="Disordered" evidence="5">
    <location>
        <begin position="119"/>
        <end position="196"/>
    </location>
</feature>
<feature type="region of interest" description="Disordered" evidence="5">
    <location>
        <begin position="869"/>
        <end position="947"/>
    </location>
</feature>
<feature type="region of interest" description="Interaction with RPGR" evidence="1">
    <location>
        <begin position="1027"/>
        <end position="1216"/>
    </location>
</feature>
<feature type="coiled-coil region" evidence="3">
    <location>
        <begin position="267"/>
        <end position="533"/>
    </location>
</feature>
<feature type="compositionally biased region" description="Polar residues" evidence="5">
    <location>
        <begin position="1"/>
        <end position="15"/>
    </location>
</feature>
<feature type="compositionally biased region" description="Polar residues" evidence="5">
    <location>
        <begin position="88"/>
        <end position="97"/>
    </location>
</feature>
<feature type="compositionally biased region" description="Basic and acidic residues" evidence="5">
    <location>
        <begin position="134"/>
        <end position="147"/>
    </location>
</feature>
<feature type="compositionally biased region" description="Basic and acidic residues" evidence="5">
    <location>
        <begin position="155"/>
        <end position="168"/>
    </location>
</feature>
<feature type="compositionally biased region" description="Polar residues" evidence="5">
    <location>
        <begin position="903"/>
        <end position="914"/>
    </location>
</feature>
<feature type="splice variant" id="VSP_009517" description="In isoform 4." evidence="9">
    <location>
        <begin position="1"/>
        <end position="903"/>
    </location>
</feature>
<feature type="splice variant" id="VSP_009516" description="In isoform 2." evidence="9">
    <location>
        <begin position="1"/>
        <end position="336"/>
    </location>
</feature>
<feature type="splice variant" id="VSP_009518" description="In isoform 3." evidence="9">
    <original>EQLKDVAYGTRQLPLCLKPLPAHENEDKVDISPWHQSENLFELHIHQAFLTSAALAQAGDTQPTTFCTYSFYDFETHCTPLVVGPQPLYDFTSQYVVEIDSLFLHYLQGASAQLDLHQAIASEHHTLAAGWICFDRVLETVERVHGSATLTGTGGEVFGVLEYWMRLRFPIRSSLQAYNKRKKAQAYLAANVLGAWEAQKDEPRSGTWKNQNELRVEIIRCCGLRSRSLGAQPSPYVMYRFFTFSDHDTTIIPASSNPYFRDLARFPVLVTSDLDQYLRREALSVYVFDDEDSEPGSYLGRVQVPLLPLAQNKSIQ</original>
    <variation>GILRSHGLPVS</variation>
    <location>
        <begin position="525"/>
        <end position="840"/>
    </location>
</feature>
<name>RPGR1_BOVIN</name>
<accession>Q9GLM3</accession>
<accession>Q9GLJ5</accession>
<accession>Q9GLJ6</accession>
<accession>Q9GLJ7</accession>
<proteinExistence type="evidence at protein level"/>
<organism>
    <name type="scientific">Bos taurus</name>
    <name type="common">Bovine</name>
    <dbReference type="NCBI Taxonomy" id="9913"/>
    <lineage>
        <taxon>Eukaryota</taxon>
        <taxon>Metazoa</taxon>
        <taxon>Chordata</taxon>
        <taxon>Craniata</taxon>
        <taxon>Vertebrata</taxon>
        <taxon>Euteleostomi</taxon>
        <taxon>Mammalia</taxon>
        <taxon>Eutheria</taxon>
        <taxon>Laurasiatheria</taxon>
        <taxon>Artiodactyla</taxon>
        <taxon>Ruminantia</taxon>
        <taxon>Pecora</taxon>
        <taxon>Bovidae</taxon>
        <taxon>Bovinae</taxon>
        <taxon>Bos</taxon>
    </lineage>
</organism>